<feature type="chain" id="PRO_0000241875" description="Orotidine 5'-phosphate decarboxylase">
    <location>
        <begin position="1"/>
        <end position="234"/>
    </location>
</feature>
<feature type="active site" description="Proton donor" evidence="1">
    <location>
        <position position="61"/>
    </location>
</feature>
<feature type="binding site" evidence="1">
    <location>
        <position position="10"/>
    </location>
    <ligand>
        <name>substrate</name>
    </ligand>
</feature>
<feature type="binding site" evidence="1">
    <location>
        <position position="32"/>
    </location>
    <ligand>
        <name>substrate</name>
    </ligand>
</feature>
<feature type="binding site" evidence="1">
    <location>
        <begin position="59"/>
        <end position="68"/>
    </location>
    <ligand>
        <name>substrate</name>
    </ligand>
</feature>
<feature type="binding site" evidence="1">
    <location>
        <position position="119"/>
    </location>
    <ligand>
        <name>substrate</name>
    </ligand>
</feature>
<feature type="binding site" evidence="1">
    <location>
        <position position="180"/>
    </location>
    <ligand>
        <name>substrate</name>
    </ligand>
</feature>
<feature type="binding site" evidence="1">
    <location>
        <position position="189"/>
    </location>
    <ligand>
        <name>substrate</name>
    </ligand>
</feature>
<feature type="binding site" evidence="1">
    <location>
        <position position="209"/>
    </location>
    <ligand>
        <name>substrate</name>
    </ligand>
</feature>
<feature type="binding site" evidence="1">
    <location>
        <position position="210"/>
    </location>
    <ligand>
        <name>substrate</name>
    </ligand>
</feature>
<sequence length="234" mass="25686">MSNKIIVALDYETEKEALQLVDQIDPSLCRLKVGKEMFTTLGTNFVKLLQDRDFDVFLDLKFHDIPNTVARAVRSAADLGVWMVDLHASGGLRMMEEAKKILEPYGKDAPILISVTVLTSMEDLDLLQIGINASPMEQVIRLAHLSQRAGLDGVVCSPQEVEILRQHLGKEFKLITPGIRPVGSEFGDQRRVMTPPAAIEAGSDYLVIGRPITQAANPAEVLRSINASIANLIA</sequence>
<organism>
    <name type="scientific">Mannheimia succiniciproducens (strain KCTC 0769BP / MBEL55E)</name>
    <dbReference type="NCBI Taxonomy" id="221988"/>
    <lineage>
        <taxon>Bacteria</taxon>
        <taxon>Pseudomonadati</taxon>
        <taxon>Pseudomonadota</taxon>
        <taxon>Gammaproteobacteria</taxon>
        <taxon>Pasteurellales</taxon>
        <taxon>Pasteurellaceae</taxon>
        <taxon>Basfia</taxon>
    </lineage>
</organism>
<accession>Q65SI1</accession>
<dbReference type="EC" id="4.1.1.23" evidence="1"/>
<dbReference type="EMBL" id="AE016827">
    <property type="protein sequence ID" value="AAU38079.1"/>
    <property type="status" value="ALT_INIT"/>
    <property type="molecule type" value="Genomic_DNA"/>
</dbReference>
<dbReference type="RefSeq" id="WP_041639844.1">
    <property type="nucleotide sequence ID" value="NC_006300.1"/>
</dbReference>
<dbReference type="SMR" id="Q65SI1"/>
<dbReference type="STRING" id="221988.MS1472"/>
<dbReference type="KEGG" id="msu:MS1472"/>
<dbReference type="eggNOG" id="COG0284">
    <property type="taxonomic scope" value="Bacteria"/>
</dbReference>
<dbReference type="HOGENOM" id="CLU_067069_0_0_6"/>
<dbReference type="OrthoDB" id="9806203at2"/>
<dbReference type="UniPathway" id="UPA00070">
    <property type="reaction ID" value="UER00120"/>
</dbReference>
<dbReference type="Proteomes" id="UP000000607">
    <property type="component" value="Chromosome"/>
</dbReference>
<dbReference type="GO" id="GO:0005829">
    <property type="term" value="C:cytosol"/>
    <property type="evidence" value="ECO:0007669"/>
    <property type="project" value="TreeGrafter"/>
</dbReference>
<dbReference type="GO" id="GO:0004590">
    <property type="term" value="F:orotidine-5'-phosphate decarboxylase activity"/>
    <property type="evidence" value="ECO:0007669"/>
    <property type="project" value="UniProtKB-UniRule"/>
</dbReference>
<dbReference type="GO" id="GO:0006207">
    <property type="term" value="P:'de novo' pyrimidine nucleobase biosynthetic process"/>
    <property type="evidence" value="ECO:0007669"/>
    <property type="project" value="InterPro"/>
</dbReference>
<dbReference type="GO" id="GO:0044205">
    <property type="term" value="P:'de novo' UMP biosynthetic process"/>
    <property type="evidence" value="ECO:0007669"/>
    <property type="project" value="UniProtKB-UniRule"/>
</dbReference>
<dbReference type="CDD" id="cd04725">
    <property type="entry name" value="OMP_decarboxylase_like"/>
    <property type="match status" value="1"/>
</dbReference>
<dbReference type="FunFam" id="3.20.20.70:FF:000015">
    <property type="entry name" value="Orotidine 5'-phosphate decarboxylase"/>
    <property type="match status" value="1"/>
</dbReference>
<dbReference type="Gene3D" id="3.20.20.70">
    <property type="entry name" value="Aldolase class I"/>
    <property type="match status" value="1"/>
</dbReference>
<dbReference type="HAMAP" id="MF_01200_B">
    <property type="entry name" value="OMPdecase_type1_B"/>
    <property type="match status" value="1"/>
</dbReference>
<dbReference type="InterPro" id="IPR013785">
    <property type="entry name" value="Aldolase_TIM"/>
</dbReference>
<dbReference type="InterPro" id="IPR014732">
    <property type="entry name" value="OMPdecase"/>
</dbReference>
<dbReference type="InterPro" id="IPR018089">
    <property type="entry name" value="OMPdecase_AS"/>
</dbReference>
<dbReference type="InterPro" id="IPR047596">
    <property type="entry name" value="OMPdecase_bac"/>
</dbReference>
<dbReference type="InterPro" id="IPR001754">
    <property type="entry name" value="OMPdeCOase_dom"/>
</dbReference>
<dbReference type="InterPro" id="IPR011060">
    <property type="entry name" value="RibuloseP-bd_barrel"/>
</dbReference>
<dbReference type="NCBIfam" id="NF001273">
    <property type="entry name" value="PRK00230.1"/>
    <property type="match status" value="1"/>
</dbReference>
<dbReference type="NCBIfam" id="TIGR01740">
    <property type="entry name" value="pyrF"/>
    <property type="match status" value="1"/>
</dbReference>
<dbReference type="PANTHER" id="PTHR32119">
    <property type="entry name" value="OROTIDINE 5'-PHOSPHATE DECARBOXYLASE"/>
    <property type="match status" value="1"/>
</dbReference>
<dbReference type="PANTHER" id="PTHR32119:SF2">
    <property type="entry name" value="OROTIDINE 5'-PHOSPHATE DECARBOXYLASE"/>
    <property type="match status" value="1"/>
</dbReference>
<dbReference type="Pfam" id="PF00215">
    <property type="entry name" value="OMPdecase"/>
    <property type="match status" value="1"/>
</dbReference>
<dbReference type="SMART" id="SM00934">
    <property type="entry name" value="OMPdecase"/>
    <property type="match status" value="1"/>
</dbReference>
<dbReference type="SUPFAM" id="SSF51366">
    <property type="entry name" value="Ribulose-phoshate binding barrel"/>
    <property type="match status" value="1"/>
</dbReference>
<dbReference type="PROSITE" id="PS00156">
    <property type="entry name" value="OMPDECASE"/>
    <property type="match status" value="1"/>
</dbReference>
<evidence type="ECO:0000255" key="1">
    <source>
        <dbReference type="HAMAP-Rule" id="MF_01200"/>
    </source>
</evidence>
<evidence type="ECO:0000305" key="2"/>
<name>PYRF_MANSM</name>
<comment type="function">
    <text evidence="1">Catalyzes the decarboxylation of orotidine 5'-monophosphate (OMP) to uridine 5'-monophosphate (UMP).</text>
</comment>
<comment type="catalytic activity">
    <reaction evidence="1">
        <text>orotidine 5'-phosphate + H(+) = UMP + CO2</text>
        <dbReference type="Rhea" id="RHEA:11596"/>
        <dbReference type="ChEBI" id="CHEBI:15378"/>
        <dbReference type="ChEBI" id="CHEBI:16526"/>
        <dbReference type="ChEBI" id="CHEBI:57538"/>
        <dbReference type="ChEBI" id="CHEBI:57865"/>
        <dbReference type="EC" id="4.1.1.23"/>
    </reaction>
</comment>
<comment type="pathway">
    <text evidence="1">Pyrimidine metabolism; UMP biosynthesis via de novo pathway; UMP from orotate: step 2/2.</text>
</comment>
<comment type="subunit">
    <text evidence="1">Homodimer.</text>
</comment>
<comment type="similarity">
    <text evidence="1">Belongs to the OMP decarboxylase family. Type 1 subfamily.</text>
</comment>
<comment type="sequence caution" evidence="2">
    <conflict type="erroneous initiation">
        <sequence resource="EMBL-CDS" id="AAU38079"/>
    </conflict>
</comment>
<protein>
    <recommendedName>
        <fullName evidence="1">Orotidine 5'-phosphate decarboxylase</fullName>
        <ecNumber evidence="1">4.1.1.23</ecNumber>
    </recommendedName>
    <alternativeName>
        <fullName evidence="1">OMP decarboxylase</fullName>
        <shortName evidence="1">OMPDCase</shortName>
        <shortName evidence="1">OMPdecase</shortName>
    </alternativeName>
</protein>
<reference key="1">
    <citation type="journal article" date="2004" name="Nat. Biotechnol.">
        <title>The genome sequence of the capnophilic rumen bacterium Mannheimia succiniciproducens.</title>
        <authorList>
            <person name="Hong S.H."/>
            <person name="Kim J.S."/>
            <person name="Lee S.Y."/>
            <person name="In Y.H."/>
            <person name="Choi S.S."/>
            <person name="Rih J.-K."/>
            <person name="Kim C.H."/>
            <person name="Jeong H."/>
            <person name="Hur C.G."/>
            <person name="Kim J.J."/>
        </authorList>
    </citation>
    <scope>NUCLEOTIDE SEQUENCE [LARGE SCALE GENOMIC DNA]</scope>
    <source>
        <strain>KCTC 0769BP / MBEL55E</strain>
    </source>
</reference>
<gene>
    <name evidence="1" type="primary">pyrF</name>
    <name type="ordered locus">MS1472</name>
</gene>
<proteinExistence type="inferred from homology"/>
<keyword id="KW-0210">Decarboxylase</keyword>
<keyword id="KW-0456">Lyase</keyword>
<keyword id="KW-0665">Pyrimidine biosynthesis</keyword>